<organism>
    <name type="scientific">Aneurinibacillus thermoaerophilus</name>
    <dbReference type="NCBI Taxonomy" id="143495"/>
    <lineage>
        <taxon>Bacteria</taxon>
        <taxon>Bacillati</taxon>
        <taxon>Bacillota</taxon>
        <taxon>Bacilli</taxon>
        <taxon>Bacillales</taxon>
        <taxon>Paenibacillaceae</taxon>
        <taxon>Aneurinibacillus group</taxon>
        <taxon>Aneurinibacillus</taxon>
    </lineage>
</organism>
<feature type="chain" id="PRO_0000421824" description="dTDP-3-amino-3,6-dideoxy-alpha-D-galactopyranose transaminase">
    <location>
        <begin position="1"/>
        <end position="363"/>
    </location>
</feature>
<feature type="modified residue" description="N6-(pyridoxal phosphate)lysine" evidence="1">
    <location>
        <position position="185"/>
    </location>
</feature>
<proteinExistence type="evidence at protein level"/>
<name>FDTB_ANETH</name>
<evidence type="ECO:0000250" key="1"/>
<evidence type="ECO:0000269" key="2">
    <source>
    </source>
</evidence>
<evidence type="ECO:0000305" key="3"/>
<dbReference type="EC" id="2.6.1.90"/>
<dbReference type="EMBL" id="AY442352">
    <property type="protein sequence ID" value="AAS55722.1"/>
    <property type="molecule type" value="Genomic_DNA"/>
</dbReference>
<dbReference type="RefSeq" id="WP_091261031.1">
    <property type="nucleotide sequence ID" value="NZ_FNDE01000034.1"/>
</dbReference>
<dbReference type="SMR" id="Q6T1W6"/>
<dbReference type="KEGG" id="ag:AAS55722"/>
<dbReference type="OrthoDB" id="9810913at2"/>
<dbReference type="BioCyc" id="MetaCyc:MONOMER-17005"/>
<dbReference type="BRENDA" id="2.6.1.90">
    <property type="organism ID" value="344"/>
</dbReference>
<dbReference type="GO" id="GO:0030170">
    <property type="term" value="F:pyridoxal phosphate binding"/>
    <property type="evidence" value="ECO:0007669"/>
    <property type="project" value="TreeGrafter"/>
</dbReference>
<dbReference type="GO" id="GO:0008483">
    <property type="term" value="F:transaminase activity"/>
    <property type="evidence" value="ECO:0007669"/>
    <property type="project" value="TreeGrafter"/>
</dbReference>
<dbReference type="GO" id="GO:0000271">
    <property type="term" value="P:polysaccharide biosynthetic process"/>
    <property type="evidence" value="ECO:0007669"/>
    <property type="project" value="TreeGrafter"/>
</dbReference>
<dbReference type="CDD" id="cd00616">
    <property type="entry name" value="AHBA_syn"/>
    <property type="match status" value="1"/>
</dbReference>
<dbReference type="FunFam" id="3.40.640.10:FF:000089">
    <property type="entry name" value="Aminotransferase, DegT/DnrJ/EryC1/StrS family"/>
    <property type="match status" value="1"/>
</dbReference>
<dbReference type="Gene3D" id="3.90.1150.10">
    <property type="entry name" value="Aspartate Aminotransferase, domain 1"/>
    <property type="match status" value="1"/>
</dbReference>
<dbReference type="Gene3D" id="3.40.640.10">
    <property type="entry name" value="Type I PLP-dependent aspartate aminotransferase-like (Major domain)"/>
    <property type="match status" value="1"/>
</dbReference>
<dbReference type="InterPro" id="IPR000653">
    <property type="entry name" value="DegT/StrS_aminotransferase"/>
</dbReference>
<dbReference type="InterPro" id="IPR015424">
    <property type="entry name" value="PyrdxlP-dep_Trfase"/>
</dbReference>
<dbReference type="InterPro" id="IPR015421">
    <property type="entry name" value="PyrdxlP-dep_Trfase_major"/>
</dbReference>
<dbReference type="InterPro" id="IPR015422">
    <property type="entry name" value="PyrdxlP-dep_Trfase_small"/>
</dbReference>
<dbReference type="PANTHER" id="PTHR30244:SF36">
    <property type="entry name" value="3-OXO-GLUCOSE-6-PHOSPHATE:GLUTAMATE AMINOTRANSFERASE"/>
    <property type="match status" value="1"/>
</dbReference>
<dbReference type="PANTHER" id="PTHR30244">
    <property type="entry name" value="TRANSAMINASE"/>
    <property type="match status" value="1"/>
</dbReference>
<dbReference type="Pfam" id="PF01041">
    <property type="entry name" value="DegT_DnrJ_EryC1"/>
    <property type="match status" value="1"/>
</dbReference>
<dbReference type="PIRSF" id="PIRSF000390">
    <property type="entry name" value="PLP_StrS"/>
    <property type="match status" value="1"/>
</dbReference>
<dbReference type="SUPFAM" id="SSF53383">
    <property type="entry name" value="PLP-dependent transferases"/>
    <property type="match status" value="1"/>
</dbReference>
<comment type="function">
    <text evidence="2">Specifically aminates dTDP-6-deoxy-D-xylohex-3-ulose to form dTDP-D-Fucp3N in the biosynthesis of dTDP-3-acetamido-3,6-dideoxy-alpha-D-galactose, a glycan chain of the S-layer.</text>
</comment>
<comment type="catalytic activity">
    <reaction evidence="2">
        <text>dTDP-3-amino-3,6-dideoxy-alpha-D-galactopyranose + 2-oxoglutarate = dTDP-3-dehydro-6-deoxy-alpha-D-galactose + L-glutamate</text>
        <dbReference type="Rhea" id="RHEA:31619"/>
        <dbReference type="ChEBI" id="CHEBI:16810"/>
        <dbReference type="ChEBI" id="CHEBI:29985"/>
        <dbReference type="ChEBI" id="CHEBI:63303"/>
        <dbReference type="ChEBI" id="CHEBI:63305"/>
        <dbReference type="EC" id="2.6.1.90"/>
    </reaction>
</comment>
<comment type="cofactor">
    <cofactor evidence="2">
        <name>pyridoxal 5'-phosphate</name>
        <dbReference type="ChEBI" id="CHEBI:597326"/>
    </cofactor>
</comment>
<comment type="similarity">
    <text evidence="3">Belongs to the DegT/DnrJ/EryC1 family.</text>
</comment>
<accession>Q6T1W6</accession>
<reference key="1">
    <citation type="journal article" date="2003" name="J. Biol. Chem.">
        <title>Biosynthesis of dTDP-3-acetamido-3,6-dideoxy-alpha-D-galactose in Aneurinibacillus thermoaerophilus L420-91T.</title>
        <authorList>
            <person name="Pfoestl A."/>
            <person name="Hofinger A."/>
            <person name="Kosma P."/>
            <person name="Messner P."/>
        </authorList>
    </citation>
    <scope>NUCLEOTIDE SEQUENCE [GENOMIC DNA]</scope>
    <scope>FUNCTION</scope>
    <scope>CATALYTIC ACTIVITY</scope>
    <scope>COFACTOR</scope>
    <source>
        <strain>L420-91T</strain>
    </source>
</reference>
<gene>
    <name type="primary">fdtB</name>
</gene>
<protein>
    <recommendedName>
        <fullName>dTDP-3-amino-3,6-dideoxy-alpha-D-galactopyranose transaminase</fullName>
        <ecNumber>2.6.1.90</ecNumber>
    </recommendedName>
    <alternativeName>
        <fullName>dTDP-6-deoxy-D-xylo-hex-3-ulose aminase</fullName>
    </alternativeName>
</protein>
<keyword id="KW-0663">Pyridoxal phosphate</keyword>
<keyword id="KW-0808">Transferase</keyword>
<sequence>MIPFLDLRQINMRYQKEIQQAMNRVLESGWYILGGEVDDFERKFASYCGAKYCIGVANGLDALTLIIRAYDIGLGDEVIVPSNTYIASILAISANGATPVLVEPDINTYNIDPLKIEEKITSRTKAIMVVHLYGQSCDMESINLIAKKYNLKVIEDCAQAHGAIYNGKRVGSLGDAAGFSFYPGKNLGALGDGGAITTNDAELAERLNVLRNYGSHKKYENLFKGVNSRLDELQAAILSIKLSYLDDDNQRRREIAAYYLEHIKNPFIHLPTVTDDKAHVWHLFVVRVKEREAFQYYLAEQNIQTLIHYPIPPHKQKAYSEWQQESFPISEQIHSEVVSLPISPVMSREEVERVVEAVNRYGY</sequence>